<evidence type="ECO:0000255" key="1">
    <source>
        <dbReference type="HAMAP-Rule" id="MF_01025"/>
    </source>
</evidence>
<gene>
    <name evidence="1" type="primary">leuA</name>
    <name type="ordered locus">Spro_0745</name>
</gene>
<dbReference type="EC" id="2.3.3.13" evidence="1"/>
<dbReference type="EMBL" id="CP000826">
    <property type="protein sequence ID" value="ABV39851.1"/>
    <property type="molecule type" value="Genomic_DNA"/>
</dbReference>
<dbReference type="SMR" id="A8G9R1"/>
<dbReference type="STRING" id="399741.Spro_0745"/>
<dbReference type="KEGG" id="spe:Spro_0745"/>
<dbReference type="eggNOG" id="COG0119">
    <property type="taxonomic scope" value="Bacteria"/>
</dbReference>
<dbReference type="HOGENOM" id="CLU_022158_0_1_6"/>
<dbReference type="OrthoDB" id="9803573at2"/>
<dbReference type="UniPathway" id="UPA00048">
    <property type="reaction ID" value="UER00070"/>
</dbReference>
<dbReference type="GO" id="GO:0005829">
    <property type="term" value="C:cytosol"/>
    <property type="evidence" value="ECO:0007669"/>
    <property type="project" value="TreeGrafter"/>
</dbReference>
<dbReference type="GO" id="GO:0003852">
    <property type="term" value="F:2-isopropylmalate synthase activity"/>
    <property type="evidence" value="ECO:0007669"/>
    <property type="project" value="UniProtKB-UniRule"/>
</dbReference>
<dbReference type="GO" id="GO:0003985">
    <property type="term" value="F:acetyl-CoA C-acetyltransferase activity"/>
    <property type="evidence" value="ECO:0007669"/>
    <property type="project" value="UniProtKB-UniRule"/>
</dbReference>
<dbReference type="GO" id="GO:0030145">
    <property type="term" value="F:manganese ion binding"/>
    <property type="evidence" value="ECO:0007669"/>
    <property type="project" value="UniProtKB-UniRule"/>
</dbReference>
<dbReference type="GO" id="GO:0009098">
    <property type="term" value="P:L-leucine biosynthetic process"/>
    <property type="evidence" value="ECO:0007669"/>
    <property type="project" value="UniProtKB-UniRule"/>
</dbReference>
<dbReference type="CDD" id="cd07940">
    <property type="entry name" value="DRE_TIM_IPMS"/>
    <property type="match status" value="1"/>
</dbReference>
<dbReference type="FunFam" id="1.10.238.260:FF:000001">
    <property type="entry name" value="2-isopropylmalate synthase"/>
    <property type="match status" value="1"/>
</dbReference>
<dbReference type="FunFam" id="3.20.20.70:FF:000010">
    <property type="entry name" value="2-isopropylmalate synthase"/>
    <property type="match status" value="1"/>
</dbReference>
<dbReference type="FunFam" id="3.30.160.270:FF:000001">
    <property type="entry name" value="2-isopropylmalate synthase"/>
    <property type="match status" value="1"/>
</dbReference>
<dbReference type="Gene3D" id="1.10.238.260">
    <property type="match status" value="1"/>
</dbReference>
<dbReference type="Gene3D" id="3.30.160.270">
    <property type="match status" value="1"/>
</dbReference>
<dbReference type="Gene3D" id="3.20.20.70">
    <property type="entry name" value="Aldolase class I"/>
    <property type="match status" value="1"/>
</dbReference>
<dbReference type="HAMAP" id="MF_01025">
    <property type="entry name" value="LeuA_type1"/>
    <property type="match status" value="1"/>
</dbReference>
<dbReference type="InterPro" id="IPR050073">
    <property type="entry name" value="2-IPM_HCS-like"/>
</dbReference>
<dbReference type="InterPro" id="IPR013709">
    <property type="entry name" value="2-isopropylmalate_synth_dimer"/>
</dbReference>
<dbReference type="InterPro" id="IPR002034">
    <property type="entry name" value="AIPM/Hcit_synth_CS"/>
</dbReference>
<dbReference type="InterPro" id="IPR013785">
    <property type="entry name" value="Aldolase_TIM"/>
</dbReference>
<dbReference type="InterPro" id="IPR054691">
    <property type="entry name" value="LeuA/HCS_post-cat"/>
</dbReference>
<dbReference type="InterPro" id="IPR036230">
    <property type="entry name" value="LeuA_allosteric_dom_sf"/>
</dbReference>
<dbReference type="InterPro" id="IPR005671">
    <property type="entry name" value="LeuA_bact_synth"/>
</dbReference>
<dbReference type="InterPro" id="IPR000891">
    <property type="entry name" value="PYR_CT"/>
</dbReference>
<dbReference type="NCBIfam" id="TIGR00973">
    <property type="entry name" value="leuA_bact"/>
    <property type="match status" value="1"/>
</dbReference>
<dbReference type="NCBIfam" id="NF002084">
    <property type="entry name" value="PRK00915.1-1"/>
    <property type="match status" value="1"/>
</dbReference>
<dbReference type="NCBIfam" id="NF002086">
    <property type="entry name" value="PRK00915.1-3"/>
    <property type="match status" value="1"/>
</dbReference>
<dbReference type="PANTHER" id="PTHR10277:SF9">
    <property type="entry name" value="2-ISOPROPYLMALATE SYNTHASE 1, CHLOROPLASTIC-RELATED"/>
    <property type="match status" value="1"/>
</dbReference>
<dbReference type="PANTHER" id="PTHR10277">
    <property type="entry name" value="HOMOCITRATE SYNTHASE-RELATED"/>
    <property type="match status" value="1"/>
</dbReference>
<dbReference type="Pfam" id="PF22617">
    <property type="entry name" value="HCS_D2"/>
    <property type="match status" value="1"/>
</dbReference>
<dbReference type="Pfam" id="PF00682">
    <property type="entry name" value="HMGL-like"/>
    <property type="match status" value="1"/>
</dbReference>
<dbReference type="Pfam" id="PF08502">
    <property type="entry name" value="LeuA_dimer"/>
    <property type="match status" value="1"/>
</dbReference>
<dbReference type="SMART" id="SM00917">
    <property type="entry name" value="LeuA_dimer"/>
    <property type="match status" value="1"/>
</dbReference>
<dbReference type="SUPFAM" id="SSF110921">
    <property type="entry name" value="2-isopropylmalate synthase LeuA, allosteric (dimerisation) domain"/>
    <property type="match status" value="1"/>
</dbReference>
<dbReference type="SUPFAM" id="SSF51569">
    <property type="entry name" value="Aldolase"/>
    <property type="match status" value="1"/>
</dbReference>
<dbReference type="PROSITE" id="PS00815">
    <property type="entry name" value="AIPM_HOMOCIT_SYNTH_1"/>
    <property type="match status" value="1"/>
</dbReference>
<dbReference type="PROSITE" id="PS00816">
    <property type="entry name" value="AIPM_HOMOCIT_SYNTH_2"/>
    <property type="match status" value="1"/>
</dbReference>
<dbReference type="PROSITE" id="PS50991">
    <property type="entry name" value="PYR_CT"/>
    <property type="match status" value="1"/>
</dbReference>
<protein>
    <recommendedName>
        <fullName evidence="1">2-isopropylmalate synthase</fullName>
        <ecNumber evidence="1">2.3.3.13</ecNumber>
    </recommendedName>
    <alternativeName>
        <fullName evidence="1">Alpha-IPM synthase</fullName>
    </alternativeName>
    <alternativeName>
        <fullName evidence="1">Alpha-isopropylmalate synthase</fullName>
    </alternativeName>
</protein>
<feature type="chain" id="PRO_1000149276" description="2-isopropylmalate synthase">
    <location>
        <begin position="1"/>
        <end position="524"/>
    </location>
</feature>
<feature type="domain" description="Pyruvate carboxyltransferase" evidence="1">
    <location>
        <begin position="5"/>
        <end position="267"/>
    </location>
</feature>
<feature type="region of interest" description="Regulatory domain" evidence="1">
    <location>
        <begin position="392"/>
        <end position="524"/>
    </location>
</feature>
<feature type="binding site" evidence="1">
    <location>
        <position position="14"/>
    </location>
    <ligand>
        <name>Mn(2+)</name>
        <dbReference type="ChEBI" id="CHEBI:29035"/>
    </ligand>
</feature>
<feature type="binding site" evidence="1">
    <location>
        <position position="202"/>
    </location>
    <ligand>
        <name>Mn(2+)</name>
        <dbReference type="ChEBI" id="CHEBI:29035"/>
    </ligand>
</feature>
<feature type="binding site" evidence="1">
    <location>
        <position position="204"/>
    </location>
    <ligand>
        <name>Mn(2+)</name>
        <dbReference type="ChEBI" id="CHEBI:29035"/>
    </ligand>
</feature>
<feature type="binding site" evidence="1">
    <location>
        <position position="238"/>
    </location>
    <ligand>
        <name>Mn(2+)</name>
        <dbReference type="ChEBI" id="CHEBI:29035"/>
    </ligand>
</feature>
<reference key="1">
    <citation type="submission" date="2007-09" db="EMBL/GenBank/DDBJ databases">
        <title>Complete sequence of chromosome of Serratia proteamaculans 568.</title>
        <authorList>
            <consortium name="US DOE Joint Genome Institute"/>
            <person name="Copeland A."/>
            <person name="Lucas S."/>
            <person name="Lapidus A."/>
            <person name="Barry K."/>
            <person name="Glavina del Rio T."/>
            <person name="Dalin E."/>
            <person name="Tice H."/>
            <person name="Pitluck S."/>
            <person name="Chain P."/>
            <person name="Malfatti S."/>
            <person name="Shin M."/>
            <person name="Vergez L."/>
            <person name="Schmutz J."/>
            <person name="Larimer F."/>
            <person name="Land M."/>
            <person name="Hauser L."/>
            <person name="Kyrpides N."/>
            <person name="Kim E."/>
            <person name="Taghavi S."/>
            <person name="Newman L."/>
            <person name="Vangronsveld J."/>
            <person name="van der Lelie D."/>
            <person name="Richardson P."/>
        </authorList>
    </citation>
    <scope>NUCLEOTIDE SEQUENCE [LARGE SCALE GENOMIC DNA]</scope>
    <source>
        <strain>568</strain>
    </source>
</reference>
<proteinExistence type="inferred from homology"/>
<keyword id="KW-0028">Amino-acid biosynthesis</keyword>
<keyword id="KW-0100">Branched-chain amino acid biosynthesis</keyword>
<keyword id="KW-0963">Cytoplasm</keyword>
<keyword id="KW-0432">Leucine biosynthesis</keyword>
<keyword id="KW-0464">Manganese</keyword>
<keyword id="KW-0479">Metal-binding</keyword>
<keyword id="KW-0808">Transferase</keyword>
<sequence>MSQQVIIFDTTLRDGEQALQASLSVKEKIQIAMALERMGVDVMEVGFPVSSPGDFESVQTIARQIKNSRVCGLARCVDKDIDVAAEALRVAEAFRIHVFLATSTLHIESKLKRSFDEVLEMAIRSVKRARNYTDDVEFSCEDAGRTPIDNLCRVVEAAINAGATTINIPDTVGYTTPNQFGGIITTLYDRVPNIDKAIISVHCHDDLGMAVGNSIAAVQAGARQVEGTLNGIGERAGNTSLEEVIMAIKVRQDIMNVHTNINHQEIFRTSQIVSQLCNMPIPANKAIVGSNAFAHSSGIHQDGVLKNRENYEIMSPQTIGLKDVQLNLTSRSGRAAVKHRMEGMGYKEQDYNLDNLYAAFLKLADKKGQVFDYDLEALAFINKQQEEPEHFSLDYFSVQSGSSIMATASVKLICGEEEKAEAATGNGPVDAVYQAINRITGYPIELVKYQLTAKGQGRDALGQVDIVVSYNGRRFHGVGLATDIVESSAKAMVHVLNNIWRSQQVEKEKQRLQQSKHQNNQETV</sequence>
<comment type="function">
    <text evidence="1">Catalyzes the condensation of the acetyl group of acetyl-CoA with 3-methyl-2-oxobutanoate (2-ketoisovalerate) to form 3-carboxy-3-hydroxy-4-methylpentanoate (2-isopropylmalate).</text>
</comment>
<comment type="catalytic activity">
    <reaction evidence="1">
        <text>3-methyl-2-oxobutanoate + acetyl-CoA + H2O = (2S)-2-isopropylmalate + CoA + H(+)</text>
        <dbReference type="Rhea" id="RHEA:21524"/>
        <dbReference type="ChEBI" id="CHEBI:1178"/>
        <dbReference type="ChEBI" id="CHEBI:11851"/>
        <dbReference type="ChEBI" id="CHEBI:15377"/>
        <dbReference type="ChEBI" id="CHEBI:15378"/>
        <dbReference type="ChEBI" id="CHEBI:57287"/>
        <dbReference type="ChEBI" id="CHEBI:57288"/>
        <dbReference type="EC" id="2.3.3.13"/>
    </reaction>
</comment>
<comment type="cofactor">
    <cofactor evidence="1">
        <name>Mn(2+)</name>
        <dbReference type="ChEBI" id="CHEBI:29035"/>
    </cofactor>
</comment>
<comment type="pathway">
    <text evidence="1">Amino-acid biosynthesis; L-leucine biosynthesis; L-leucine from 3-methyl-2-oxobutanoate: step 1/4.</text>
</comment>
<comment type="subunit">
    <text evidence="1">Homodimer.</text>
</comment>
<comment type="subcellular location">
    <subcellularLocation>
        <location evidence="1">Cytoplasm</location>
    </subcellularLocation>
</comment>
<comment type="similarity">
    <text evidence="1">Belongs to the alpha-IPM synthase/homocitrate synthase family. LeuA type 1 subfamily.</text>
</comment>
<accession>A8G9R1</accession>
<organism>
    <name type="scientific">Serratia proteamaculans (strain 568)</name>
    <dbReference type="NCBI Taxonomy" id="399741"/>
    <lineage>
        <taxon>Bacteria</taxon>
        <taxon>Pseudomonadati</taxon>
        <taxon>Pseudomonadota</taxon>
        <taxon>Gammaproteobacteria</taxon>
        <taxon>Enterobacterales</taxon>
        <taxon>Yersiniaceae</taxon>
        <taxon>Serratia</taxon>
    </lineage>
</organism>
<name>LEU1_SERP5</name>